<feature type="chain" id="PRO_0000283129" description="F-box/FBD/LRR-repeat protein At5g53840">
    <location>
        <begin position="1"/>
        <end position="444"/>
    </location>
</feature>
<feature type="domain" description="F-box" evidence="1">
    <location>
        <begin position="17"/>
        <end position="63"/>
    </location>
</feature>
<feature type="repeat" description="LRR 1">
    <location>
        <begin position="103"/>
        <end position="123"/>
    </location>
</feature>
<feature type="repeat" description="LRR 2">
    <location>
        <begin position="124"/>
        <end position="150"/>
    </location>
</feature>
<feature type="repeat" description="LRR 3">
    <location>
        <begin position="151"/>
        <end position="171"/>
    </location>
</feature>
<feature type="repeat" description="LRR 4">
    <location>
        <begin position="172"/>
        <end position="197"/>
    </location>
</feature>
<feature type="repeat" description="LRR 5">
    <location>
        <begin position="199"/>
        <end position="224"/>
    </location>
</feature>
<feature type="repeat" description="LRR 6">
    <location>
        <begin position="226"/>
        <end position="252"/>
    </location>
</feature>
<feature type="repeat" description="LRR 7">
    <location>
        <begin position="273"/>
        <end position="299"/>
    </location>
</feature>
<feature type="repeat" description="LRR 8">
    <location>
        <begin position="300"/>
        <end position="321"/>
    </location>
</feature>
<feature type="repeat" description="LRR 9">
    <location>
        <begin position="322"/>
        <end position="347"/>
    </location>
</feature>
<feature type="domain" description="FBD">
    <location>
        <begin position="356"/>
        <end position="408"/>
    </location>
</feature>
<feature type="repeat" description="LRR 10">
    <location>
        <begin position="369"/>
        <end position="396"/>
    </location>
</feature>
<feature type="repeat" description="LRR 11">
    <location>
        <begin position="398"/>
        <end position="423"/>
    </location>
</feature>
<proteinExistence type="evidence at transcript level"/>
<sequence>MVKTEICGKGSSQGSEEERLSQLPDHLICVILSHLSTKDAVRTSILSTRWRNLWQLVPVLDFDSRELRSFSEFVSFAGSFFYLHKDSYIQKLRVCIYDLAGNYYLTSWIDLVTRHRIQHIDISVFTCSGFGVIPLSLYTCDTLVHLKLSRVTMVNVEFVSLPCLKILDLDFVNFTNETTLDKIISCSPVLEELTIVKSSEDNVKIIQVRSQTLKRVEIHRRFDRHNGLVIDTPLLQFLSIKAHSIKSIEFINLGFTTKVDIDVNLLDPNDLSNRSMTRDFFTTISRVRSLVIRHGTIKDIFHYMELEPLQQFCYLSELSAVCSISNLEMLLNLLKSCPKLESLSLKLVDYEKNKKEEVMSSTVPPPCLVSSLKFVKLESQLLGCGTELKVARYFLENSTILEKLTLKIDYMYKDEANVNHIRQTLHAVPRCSSTCEVVIHSLLY</sequence>
<organism>
    <name type="scientific">Arabidopsis thaliana</name>
    <name type="common">Mouse-ear cress</name>
    <dbReference type="NCBI Taxonomy" id="3702"/>
    <lineage>
        <taxon>Eukaryota</taxon>
        <taxon>Viridiplantae</taxon>
        <taxon>Streptophyta</taxon>
        <taxon>Embryophyta</taxon>
        <taxon>Tracheophyta</taxon>
        <taxon>Spermatophyta</taxon>
        <taxon>Magnoliopsida</taxon>
        <taxon>eudicotyledons</taxon>
        <taxon>Gunneridae</taxon>
        <taxon>Pentapetalae</taxon>
        <taxon>rosids</taxon>
        <taxon>malvids</taxon>
        <taxon>Brassicales</taxon>
        <taxon>Brassicaceae</taxon>
        <taxon>Camelineae</taxon>
        <taxon>Arabidopsis</taxon>
    </lineage>
</organism>
<dbReference type="EMBL" id="AB025616">
    <property type="protein sequence ID" value="BAB10069.1"/>
    <property type="molecule type" value="Genomic_DNA"/>
</dbReference>
<dbReference type="EMBL" id="AB007644">
    <property type="protein sequence ID" value="BAB10069.1"/>
    <property type="status" value="JOINED"/>
    <property type="molecule type" value="Genomic_DNA"/>
</dbReference>
<dbReference type="EMBL" id="CP002688">
    <property type="protein sequence ID" value="AED96412.1"/>
    <property type="molecule type" value="Genomic_DNA"/>
</dbReference>
<dbReference type="EMBL" id="DQ056719">
    <property type="protein sequence ID" value="AAY78864.1"/>
    <property type="molecule type" value="mRNA"/>
</dbReference>
<dbReference type="RefSeq" id="NP_568800.1">
    <property type="nucleotide sequence ID" value="NM_124763.1"/>
</dbReference>
<dbReference type="BioGRID" id="20709">
    <property type="interactions" value="1"/>
</dbReference>
<dbReference type="FunCoup" id="Q9FGQ3">
    <property type="interactions" value="2"/>
</dbReference>
<dbReference type="STRING" id="3702.Q9FGQ3"/>
<dbReference type="PaxDb" id="3702-AT5G53840.1"/>
<dbReference type="EnsemblPlants" id="AT5G53840.1">
    <property type="protein sequence ID" value="AT5G53840.1"/>
    <property type="gene ID" value="AT5G53840"/>
</dbReference>
<dbReference type="GeneID" id="835465"/>
<dbReference type="Gramene" id="AT5G53840.1">
    <property type="protein sequence ID" value="AT5G53840.1"/>
    <property type="gene ID" value="AT5G53840"/>
</dbReference>
<dbReference type="KEGG" id="ath:AT5G53840"/>
<dbReference type="Araport" id="AT5G53840"/>
<dbReference type="TAIR" id="AT5G53840"/>
<dbReference type="HOGENOM" id="CLU_010721_1_3_1"/>
<dbReference type="InParanoid" id="Q9FGQ3"/>
<dbReference type="OMA" id="AITHNIQ"/>
<dbReference type="PhylomeDB" id="Q9FGQ3"/>
<dbReference type="PRO" id="PR:Q9FGQ3"/>
<dbReference type="Proteomes" id="UP000006548">
    <property type="component" value="Chromosome 5"/>
</dbReference>
<dbReference type="ExpressionAtlas" id="Q9FGQ3">
    <property type="expression patterns" value="baseline and differential"/>
</dbReference>
<dbReference type="CDD" id="cd22160">
    <property type="entry name" value="F-box_AtFBL13-like"/>
    <property type="match status" value="1"/>
</dbReference>
<dbReference type="Gene3D" id="1.20.1280.50">
    <property type="match status" value="1"/>
</dbReference>
<dbReference type="Gene3D" id="3.80.10.10">
    <property type="entry name" value="Ribonuclease Inhibitor"/>
    <property type="match status" value="1"/>
</dbReference>
<dbReference type="InterPro" id="IPR036047">
    <property type="entry name" value="F-box-like_dom_sf"/>
</dbReference>
<dbReference type="InterPro" id="IPR053781">
    <property type="entry name" value="F-box_AtFBL13-like"/>
</dbReference>
<dbReference type="InterPro" id="IPR001810">
    <property type="entry name" value="F-box_dom"/>
</dbReference>
<dbReference type="InterPro" id="IPR006566">
    <property type="entry name" value="FBD"/>
</dbReference>
<dbReference type="InterPro" id="IPR050232">
    <property type="entry name" value="FBL13/AtMIF1-like"/>
</dbReference>
<dbReference type="InterPro" id="IPR032675">
    <property type="entry name" value="LRR_dom_sf"/>
</dbReference>
<dbReference type="InterPro" id="IPR055411">
    <property type="entry name" value="LRR_FXL15/At3g58940/PEG3-like"/>
</dbReference>
<dbReference type="PANTHER" id="PTHR31900">
    <property type="entry name" value="F-BOX/RNI SUPERFAMILY PROTEIN-RELATED"/>
    <property type="match status" value="1"/>
</dbReference>
<dbReference type="PANTHER" id="PTHR31900:SF25">
    <property type="entry name" value="FBD DOMAIN-CONTAINING PROTEIN"/>
    <property type="match status" value="1"/>
</dbReference>
<dbReference type="Pfam" id="PF00646">
    <property type="entry name" value="F-box"/>
    <property type="match status" value="1"/>
</dbReference>
<dbReference type="Pfam" id="PF08387">
    <property type="entry name" value="FBD"/>
    <property type="match status" value="1"/>
</dbReference>
<dbReference type="Pfam" id="PF24758">
    <property type="entry name" value="LRR_At5g56370"/>
    <property type="match status" value="1"/>
</dbReference>
<dbReference type="SMART" id="SM00579">
    <property type="entry name" value="FBD"/>
    <property type="match status" value="1"/>
</dbReference>
<dbReference type="SMART" id="SM00256">
    <property type="entry name" value="FBOX"/>
    <property type="match status" value="1"/>
</dbReference>
<dbReference type="SUPFAM" id="SSF81383">
    <property type="entry name" value="F-box domain"/>
    <property type="match status" value="1"/>
</dbReference>
<dbReference type="SUPFAM" id="SSF52047">
    <property type="entry name" value="RNI-like"/>
    <property type="match status" value="1"/>
</dbReference>
<dbReference type="PROSITE" id="PS50181">
    <property type="entry name" value="FBOX"/>
    <property type="match status" value="1"/>
</dbReference>
<protein>
    <recommendedName>
        <fullName>F-box/FBD/LRR-repeat protein At5g53840</fullName>
    </recommendedName>
</protein>
<reference key="1">
    <citation type="submission" date="1999-04" db="EMBL/GenBank/DDBJ databases">
        <title>Structural analysis of Arabidopsis thaliana chromosome 5. XI.</title>
        <authorList>
            <person name="Kaneko T."/>
            <person name="Katoh T."/>
            <person name="Asamizu E."/>
            <person name="Sato S."/>
            <person name="Nakamura Y."/>
            <person name="Kotani H."/>
            <person name="Tabata S."/>
        </authorList>
    </citation>
    <scope>NUCLEOTIDE SEQUENCE [LARGE SCALE GENOMIC DNA]</scope>
    <source>
        <strain>cv. Columbia</strain>
    </source>
</reference>
<reference key="2">
    <citation type="journal article" date="1997" name="DNA Res.">
        <title>Structural analysis of Arabidopsis thaliana chromosome 5. III. Sequence features of the regions of 1,191,918 bp covered by seventeen physically assigned P1 clones.</title>
        <authorList>
            <person name="Nakamura Y."/>
            <person name="Sato S."/>
            <person name="Kaneko T."/>
            <person name="Kotani H."/>
            <person name="Asamizu E."/>
            <person name="Miyajima N."/>
            <person name="Tabata S."/>
        </authorList>
    </citation>
    <scope>NUCLEOTIDE SEQUENCE [LARGE SCALE GENOMIC DNA]</scope>
    <source>
        <strain>cv. Columbia</strain>
    </source>
</reference>
<reference key="3">
    <citation type="journal article" date="2017" name="Plant J.">
        <title>Araport11: a complete reannotation of the Arabidopsis thaliana reference genome.</title>
        <authorList>
            <person name="Cheng C.Y."/>
            <person name="Krishnakumar V."/>
            <person name="Chan A.P."/>
            <person name="Thibaud-Nissen F."/>
            <person name="Schobel S."/>
            <person name="Town C.D."/>
        </authorList>
    </citation>
    <scope>GENOME REANNOTATION</scope>
    <source>
        <strain>cv. Columbia</strain>
    </source>
</reference>
<reference key="4">
    <citation type="submission" date="2005-05" db="EMBL/GenBank/DDBJ databases">
        <authorList>
            <person name="Underwood B.A."/>
            <person name="Xiao Y.-L."/>
            <person name="Moskal W.A. Jr."/>
            <person name="Monaghan E.L."/>
            <person name="Wang W."/>
            <person name="Redman J.C."/>
            <person name="Wu H.C."/>
            <person name="Utterback T."/>
            <person name="Town C.D."/>
        </authorList>
    </citation>
    <scope>NUCLEOTIDE SEQUENCE [LARGE SCALE MRNA]</scope>
    <source>
        <strain>cv. Columbia</strain>
    </source>
</reference>
<keyword id="KW-0433">Leucine-rich repeat</keyword>
<keyword id="KW-1185">Reference proteome</keyword>
<keyword id="KW-0677">Repeat</keyword>
<gene>
    <name type="ordered locus">At5g53840</name>
    <name type="ORF">K6O8.1</name>
</gene>
<name>FDL37_ARATH</name>
<accession>Q9FGQ3</accession>
<evidence type="ECO:0000255" key="1">
    <source>
        <dbReference type="PROSITE-ProRule" id="PRU00080"/>
    </source>
</evidence>